<keyword id="KW-0903">Direct protein sequencing</keyword>
<keyword id="KW-1015">Disulfide bond</keyword>
<keyword id="KW-0646">Protease inhibitor</keyword>
<keyword id="KW-0964">Secreted</keyword>
<keyword id="KW-0722">Serine protease inhibitor</keyword>
<reference key="1">
    <citation type="journal article" date="1997" name="J. Mol. Evol.">
        <title>Molecular phylogenetic characterization of Streptomyces protease inhibitor family.</title>
        <authorList>
            <person name="Taguchi S."/>
            <person name="Kojima S."/>
            <person name="Terabe M."/>
            <person name="Kumazawa Y."/>
            <person name="Kohriyama H."/>
            <person name="Suzuki M."/>
            <person name="Miura K."/>
            <person name="Momose H."/>
        </authorList>
    </citation>
    <scope>PROTEIN SEQUENCE</scope>
    <source>
        <strain>ATCC 23933 / DSM 40038 / NCIMB 9720 / NRRL B-1995 / ISP 5038</strain>
    </source>
</reference>
<feature type="chain" id="PRO_0000208665" description="Protease inhibitor SIL-V5">
    <location>
        <begin position="1"/>
        <end position="108"/>
    </location>
</feature>
<feature type="site" description="Reactive bond" evidence="1">
    <location>
        <begin position="68"/>
        <end position="69"/>
    </location>
</feature>
<feature type="disulfide bond" evidence="1">
    <location>
        <begin position="29"/>
        <end position="44"/>
    </location>
</feature>
<feature type="disulfide bond" evidence="1">
    <location>
        <begin position="66"/>
        <end position="96"/>
    </location>
</feature>
<protein>
    <recommendedName>
        <fullName>Protease inhibitor SIL-V5</fullName>
    </recommendedName>
</protein>
<sequence>YAPSALVLTIGQGDSAATAGVQRAVTLTCTPKAAGSHPNTSGACAQLRLSNGDFDKLVKIKDGTMCTREWNPSTVTAEGVWEGRRVSFEHTFANPCEMKAGKGTVFEF</sequence>
<proteinExistence type="evidence at protein level"/>
<evidence type="ECO:0000250" key="1"/>
<evidence type="ECO:0000305" key="2"/>
<name>SSI_STRLT</name>
<comment type="subunit">
    <text evidence="1">Homodimer.</text>
</comment>
<comment type="subcellular location">
    <subcellularLocation>
        <location evidence="1">Secreted</location>
    </subcellularLocation>
</comment>
<comment type="similarity">
    <text evidence="2">Belongs to the protease inhibitor I16 (SSI) family.</text>
</comment>
<accession>P80600</accession>
<organism>
    <name type="scientific">Streptomyces luteoverticillatus</name>
    <name type="common">Streptoverticillium luteoverticillatus</name>
    <dbReference type="NCBI Taxonomy" id="66425"/>
    <lineage>
        <taxon>Bacteria</taxon>
        <taxon>Bacillati</taxon>
        <taxon>Actinomycetota</taxon>
        <taxon>Actinomycetes</taxon>
        <taxon>Kitasatosporales</taxon>
        <taxon>Streptomycetaceae</taxon>
        <taxon>Streptomyces</taxon>
    </lineage>
</organism>
<dbReference type="SMR" id="P80600"/>
<dbReference type="MEROPS" id="I16.016"/>
<dbReference type="GO" id="GO:0005576">
    <property type="term" value="C:extracellular region"/>
    <property type="evidence" value="ECO:0007669"/>
    <property type="project" value="UniProtKB-SubCell"/>
</dbReference>
<dbReference type="GO" id="GO:0004867">
    <property type="term" value="F:serine-type endopeptidase inhibitor activity"/>
    <property type="evidence" value="ECO:0007669"/>
    <property type="project" value="UniProtKB-UniRule"/>
</dbReference>
<dbReference type="Gene3D" id="3.30.350.10">
    <property type="entry name" value="Subtilisin inhibitor-like"/>
    <property type="match status" value="1"/>
</dbReference>
<dbReference type="HAMAP" id="MF_00778">
    <property type="entry name" value="SSI"/>
    <property type="match status" value="1"/>
</dbReference>
<dbReference type="InterPro" id="IPR000691">
    <property type="entry name" value="Prot_inh_I16_SSI"/>
</dbReference>
<dbReference type="InterPro" id="IPR020054">
    <property type="entry name" value="Prot_inh_SSI_I16_CS"/>
</dbReference>
<dbReference type="InterPro" id="IPR023549">
    <property type="entry name" value="Subtilisin_inhibitor"/>
</dbReference>
<dbReference type="InterPro" id="IPR036819">
    <property type="entry name" value="Subtilisin_inhibitor-like_sf"/>
</dbReference>
<dbReference type="Pfam" id="PF00720">
    <property type="entry name" value="SSI"/>
    <property type="match status" value="1"/>
</dbReference>
<dbReference type="PRINTS" id="PR00294">
    <property type="entry name" value="SSBTLNINHBTR"/>
</dbReference>
<dbReference type="SUPFAM" id="SSF55399">
    <property type="entry name" value="Subtilisin inhibitor"/>
    <property type="match status" value="1"/>
</dbReference>
<dbReference type="PROSITE" id="PS00999">
    <property type="entry name" value="SSI"/>
    <property type="match status" value="1"/>
</dbReference>